<feature type="initiator methionine" description="Removed" evidence="1">
    <location>
        <position position="1"/>
    </location>
</feature>
<feature type="chain" id="PRO_0000267106" description="Enolase">
    <location>
        <begin position="2"/>
        <end position="432"/>
    </location>
</feature>
<feature type="active site" description="Proton donor" evidence="2">
    <location>
        <position position="209"/>
    </location>
</feature>
<feature type="active site" description="Proton acceptor" evidence="2">
    <location>
        <position position="342"/>
    </location>
</feature>
<feature type="binding site" evidence="2">
    <location>
        <position position="167"/>
    </location>
    <ligand>
        <name>(2R)-2-phosphoglycerate</name>
        <dbReference type="ChEBI" id="CHEBI:58289"/>
    </ligand>
</feature>
<feature type="binding site" evidence="2">
    <location>
        <position position="246"/>
    </location>
    <ligand>
        <name>Mg(2+)</name>
        <dbReference type="ChEBI" id="CHEBI:18420"/>
    </ligand>
</feature>
<feature type="binding site" evidence="2">
    <location>
        <position position="290"/>
    </location>
    <ligand>
        <name>Mg(2+)</name>
        <dbReference type="ChEBI" id="CHEBI:18420"/>
    </ligand>
</feature>
<feature type="binding site" evidence="2">
    <location>
        <position position="317"/>
    </location>
    <ligand>
        <name>Mg(2+)</name>
        <dbReference type="ChEBI" id="CHEBI:18420"/>
    </ligand>
</feature>
<feature type="binding site" evidence="2">
    <location>
        <position position="342"/>
    </location>
    <ligand>
        <name>(2R)-2-phosphoglycerate</name>
        <dbReference type="ChEBI" id="CHEBI:58289"/>
    </ligand>
</feature>
<feature type="binding site" evidence="2">
    <location>
        <position position="371"/>
    </location>
    <ligand>
        <name>(2R)-2-phosphoglycerate</name>
        <dbReference type="ChEBI" id="CHEBI:58289"/>
    </ligand>
</feature>
<feature type="binding site" evidence="2">
    <location>
        <position position="372"/>
    </location>
    <ligand>
        <name>(2R)-2-phosphoglycerate</name>
        <dbReference type="ChEBI" id="CHEBI:58289"/>
    </ligand>
</feature>
<feature type="binding site" evidence="2">
    <location>
        <position position="393"/>
    </location>
    <ligand>
        <name>(2R)-2-phosphoglycerate</name>
        <dbReference type="ChEBI" id="CHEBI:58289"/>
    </ligand>
</feature>
<evidence type="ECO:0000250" key="1"/>
<evidence type="ECO:0000255" key="2">
    <source>
        <dbReference type="HAMAP-Rule" id="MF_00318"/>
    </source>
</evidence>
<gene>
    <name evidence="2" type="primary">eno</name>
    <name type="ordered locus">SSON_2936</name>
</gene>
<keyword id="KW-0963">Cytoplasm</keyword>
<keyword id="KW-0324">Glycolysis</keyword>
<keyword id="KW-0456">Lyase</keyword>
<keyword id="KW-0460">Magnesium</keyword>
<keyword id="KW-0479">Metal-binding</keyword>
<keyword id="KW-1185">Reference proteome</keyword>
<keyword id="KW-0964">Secreted</keyword>
<accession>Q3YY77</accession>
<name>ENO_SHISS</name>
<sequence length="432" mass="45699">MSKIVKIIGREIIDSRGNPTVEAEVHLEGGFVGMAAAPSGASTGSREALELRDGDKSRFLGKGVTKAVAAVNGPIAQALIGKDAKDQAGIDKIMIDLDGTENKSKFGANAILAVSLANAKAAAADKGMPLYEHIAELNGTPGKYSMPVPMMNIINGGEHADNNVDIQEFMIQPVGAKTVKEAIRMGSEVFHHLAKVLKAKGMNTAVGDEGGYAPNLGSNAEALAVIAEAVKAAGYELGKDITLAMDCAASEFYKDGKYVLAGEGNKAFTSEEFTHFLEELTKQYPIVSIEDGLDESDWDGFAYQTKVLGDKIQLVGDDLFVTNTKILKEGIEKGIANSILIKFNQIGSLTETLAAIKMAKDAGYTAVISHRSGETEDATIADLAVGTAAGQIKTGSMSRSDRVAKYNQLIRIEEALGEKAPYNGRKEIKGQA</sequence>
<reference key="1">
    <citation type="journal article" date="2005" name="Nucleic Acids Res.">
        <title>Genome dynamics and diversity of Shigella species, the etiologic agents of bacillary dysentery.</title>
        <authorList>
            <person name="Yang F."/>
            <person name="Yang J."/>
            <person name="Zhang X."/>
            <person name="Chen L."/>
            <person name="Jiang Y."/>
            <person name="Yan Y."/>
            <person name="Tang X."/>
            <person name="Wang J."/>
            <person name="Xiong Z."/>
            <person name="Dong J."/>
            <person name="Xue Y."/>
            <person name="Zhu Y."/>
            <person name="Xu X."/>
            <person name="Sun L."/>
            <person name="Chen S."/>
            <person name="Nie H."/>
            <person name="Peng J."/>
            <person name="Xu J."/>
            <person name="Wang Y."/>
            <person name="Yuan Z."/>
            <person name="Wen Y."/>
            <person name="Yao Z."/>
            <person name="Shen Y."/>
            <person name="Qiang B."/>
            <person name="Hou Y."/>
            <person name="Yu J."/>
            <person name="Jin Q."/>
        </authorList>
    </citation>
    <scope>NUCLEOTIDE SEQUENCE [LARGE SCALE GENOMIC DNA]</scope>
    <source>
        <strain>Ss046</strain>
    </source>
</reference>
<protein>
    <recommendedName>
        <fullName evidence="2">Enolase</fullName>
        <ecNumber evidence="2">4.2.1.11</ecNumber>
    </recommendedName>
    <alternativeName>
        <fullName evidence="2">2-phospho-D-glycerate hydro-lyase</fullName>
    </alternativeName>
    <alternativeName>
        <fullName evidence="2">2-phosphoglycerate dehydratase</fullName>
    </alternativeName>
</protein>
<proteinExistence type="inferred from homology"/>
<comment type="function">
    <text evidence="2">Catalyzes the reversible conversion of 2-phosphoglycerate (2-PG) into phosphoenolpyruvate (PEP). It is essential for the degradation of carbohydrates via glycolysis.</text>
</comment>
<comment type="catalytic activity">
    <reaction evidence="2">
        <text>(2R)-2-phosphoglycerate = phosphoenolpyruvate + H2O</text>
        <dbReference type="Rhea" id="RHEA:10164"/>
        <dbReference type="ChEBI" id="CHEBI:15377"/>
        <dbReference type="ChEBI" id="CHEBI:58289"/>
        <dbReference type="ChEBI" id="CHEBI:58702"/>
        <dbReference type="EC" id="4.2.1.11"/>
    </reaction>
</comment>
<comment type="cofactor">
    <cofactor evidence="2">
        <name>Mg(2+)</name>
        <dbReference type="ChEBI" id="CHEBI:18420"/>
    </cofactor>
    <text evidence="2">Binds a second Mg(2+) ion via substrate during catalysis.</text>
</comment>
<comment type="pathway">
    <text evidence="2">Carbohydrate degradation; glycolysis; pyruvate from D-glyceraldehyde 3-phosphate: step 4/5.</text>
</comment>
<comment type="subunit">
    <text evidence="2">Component of the RNA degradosome, a multiprotein complex involved in RNA processing and mRNA degradation.</text>
</comment>
<comment type="subcellular location">
    <subcellularLocation>
        <location evidence="2">Cytoplasm</location>
    </subcellularLocation>
    <subcellularLocation>
        <location evidence="2">Secreted</location>
    </subcellularLocation>
    <subcellularLocation>
        <location evidence="2">Cell surface</location>
    </subcellularLocation>
    <text evidence="2">Fractions of enolase are present in both the cytoplasm and on the cell surface.</text>
</comment>
<comment type="similarity">
    <text evidence="2">Belongs to the enolase family.</text>
</comment>
<dbReference type="EC" id="4.2.1.11" evidence="2"/>
<dbReference type="EMBL" id="CP000038">
    <property type="protein sequence ID" value="AAZ89535.1"/>
    <property type="molecule type" value="Genomic_DNA"/>
</dbReference>
<dbReference type="RefSeq" id="WP_000036730.1">
    <property type="nucleotide sequence ID" value="NC_007384.1"/>
</dbReference>
<dbReference type="SMR" id="Q3YY77"/>
<dbReference type="KEGG" id="ssn:SSON_2936"/>
<dbReference type="HOGENOM" id="CLU_031223_2_1_6"/>
<dbReference type="UniPathway" id="UPA00109">
    <property type="reaction ID" value="UER00187"/>
</dbReference>
<dbReference type="Proteomes" id="UP000002529">
    <property type="component" value="Chromosome"/>
</dbReference>
<dbReference type="GO" id="GO:0009986">
    <property type="term" value="C:cell surface"/>
    <property type="evidence" value="ECO:0007669"/>
    <property type="project" value="UniProtKB-SubCell"/>
</dbReference>
<dbReference type="GO" id="GO:0005576">
    <property type="term" value="C:extracellular region"/>
    <property type="evidence" value="ECO:0007669"/>
    <property type="project" value="UniProtKB-SubCell"/>
</dbReference>
<dbReference type="GO" id="GO:0000015">
    <property type="term" value="C:phosphopyruvate hydratase complex"/>
    <property type="evidence" value="ECO:0007669"/>
    <property type="project" value="InterPro"/>
</dbReference>
<dbReference type="GO" id="GO:0000287">
    <property type="term" value="F:magnesium ion binding"/>
    <property type="evidence" value="ECO:0007669"/>
    <property type="project" value="UniProtKB-UniRule"/>
</dbReference>
<dbReference type="GO" id="GO:0004634">
    <property type="term" value="F:phosphopyruvate hydratase activity"/>
    <property type="evidence" value="ECO:0007669"/>
    <property type="project" value="UniProtKB-UniRule"/>
</dbReference>
<dbReference type="GO" id="GO:0006096">
    <property type="term" value="P:glycolytic process"/>
    <property type="evidence" value="ECO:0007669"/>
    <property type="project" value="UniProtKB-UniRule"/>
</dbReference>
<dbReference type="CDD" id="cd03313">
    <property type="entry name" value="enolase"/>
    <property type="match status" value="1"/>
</dbReference>
<dbReference type="FunFam" id="3.20.20.120:FF:000001">
    <property type="entry name" value="Enolase"/>
    <property type="match status" value="1"/>
</dbReference>
<dbReference type="FunFam" id="3.30.390.10:FF:000001">
    <property type="entry name" value="Enolase"/>
    <property type="match status" value="1"/>
</dbReference>
<dbReference type="Gene3D" id="3.20.20.120">
    <property type="entry name" value="Enolase-like C-terminal domain"/>
    <property type="match status" value="1"/>
</dbReference>
<dbReference type="Gene3D" id="3.30.390.10">
    <property type="entry name" value="Enolase-like, N-terminal domain"/>
    <property type="match status" value="1"/>
</dbReference>
<dbReference type="HAMAP" id="MF_00318">
    <property type="entry name" value="Enolase"/>
    <property type="match status" value="1"/>
</dbReference>
<dbReference type="InterPro" id="IPR000941">
    <property type="entry name" value="Enolase"/>
</dbReference>
<dbReference type="InterPro" id="IPR036849">
    <property type="entry name" value="Enolase-like_C_sf"/>
</dbReference>
<dbReference type="InterPro" id="IPR029017">
    <property type="entry name" value="Enolase-like_N"/>
</dbReference>
<dbReference type="InterPro" id="IPR020810">
    <property type="entry name" value="Enolase_C"/>
</dbReference>
<dbReference type="InterPro" id="IPR020809">
    <property type="entry name" value="Enolase_CS"/>
</dbReference>
<dbReference type="InterPro" id="IPR020811">
    <property type="entry name" value="Enolase_N"/>
</dbReference>
<dbReference type="NCBIfam" id="TIGR01060">
    <property type="entry name" value="eno"/>
    <property type="match status" value="1"/>
</dbReference>
<dbReference type="PANTHER" id="PTHR11902">
    <property type="entry name" value="ENOLASE"/>
    <property type="match status" value="1"/>
</dbReference>
<dbReference type="PANTHER" id="PTHR11902:SF1">
    <property type="entry name" value="ENOLASE"/>
    <property type="match status" value="1"/>
</dbReference>
<dbReference type="Pfam" id="PF00113">
    <property type="entry name" value="Enolase_C"/>
    <property type="match status" value="1"/>
</dbReference>
<dbReference type="Pfam" id="PF03952">
    <property type="entry name" value="Enolase_N"/>
    <property type="match status" value="1"/>
</dbReference>
<dbReference type="PIRSF" id="PIRSF001400">
    <property type="entry name" value="Enolase"/>
    <property type="match status" value="1"/>
</dbReference>
<dbReference type="PRINTS" id="PR00148">
    <property type="entry name" value="ENOLASE"/>
</dbReference>
<dbReference type="SFLD" id="SFLDS00001">
    <property type="entry name" value="Enolase"/>
    <property type="match status" value="1"/>
</dbReference>
<dbReference type="SFLD" id="SFLDF00002">
    <property type="entry name" value="enolase"/>
    <property type="match status" value="1"/>
</dbReference>
<dbReference type="SMART" id="SM01192">
    <property type="entry name" value="Enolase_C"/>
    <property type="match status" value="1"/>
</dbReference>
<dbReference type="SMART" id="SM01193">
    <property type="entry name" value="Enolase_N"/>
    <property type="match status" value="1"/>
</dbReference>
<dbReference type="SUPFAM" id="SSF51604">
    <property type="entry name" value="Enolase C-terminal domain-like"/>
    <property type="match status" value="1"/>
</dbReference>
<dbReference type="SUPFAM" id="SSF54826">
    <property type="entry name" value="Enolase N-terminal domain-like"/>
    <property type="match status" value="1"/>
</dbReference>
<dbReference type="PROSITE" id="PS00164">
    <property type="entry name" value="ENOLASE"/>
    <property type="match status" value="1"/>
</dbReference>
<organism>
    <name type="scientific">Shigella sonnei (strain Ss046)</name>
    <dbReference type="NCBI Taxonomy" id="300269"/>
    <lineage>
        <taxon>Bacteria</taxon>
        <taxon>Pseudomonadati</taxon>
        <taxon>Pseudomonadota</taxon>
        <taxon>Gammaproteobacteria</taxon>
        <taxon>Enterobacterales</taxon>
        <taxon>Enterobacteriaceae</taxon>
        <taxon>Shigella</taxon>
    </lineage>
</organism>